<name>YDT7_SCHPO</name>
<gene>
    <name type="ORF">SPAC6B12.07c</name>
</gene>
<keyword id="KW-0963">Cytoplasm</keyword>
<keyword id="KW-0479">Metal-binding</keyword>
<keyword id="KW-1185">Reference proteome</keyword>
<keyword id="KW-0862">Zinc</keyword>
<keyword id="KW-0863">Zinc-finger</keyword>
<accession>O14212</accession>
<comment type="subcellular location">
    <subcellularLocation>
        <location evidence="4">Cytoplasm</location>
    </subcellularLocation>
</comment>
<proteinExistence type="predicted"/>
<evidence type="ECO:0000255" key="1">
    <source>
        <dbReference type="PROSITE-ProRule" id="PRU00175"/>
    </source>
</evidence>
<evidence type="ECO:0000255" key="2">
    <source>
        <dbReference type="PROSITE-ProRule" id="PRU00714"/>
    </source>
</evidence>
<evidence type="ECO:0000256" key="3">
    <source>
        <dbReference type="SAM" id="MobiDB-lite"/>
    </source>
</evidence>
<evidence type="ECO:0000269" key="4">
    <source>
    </source>
</evidence>
<organism>
    <name type="scientific">Schizosaccharomyces pombe (strain 972 / ATCC 24843)</name>
    <name type="common">Fission yeast</name>
    <dbReference type="NCBI Taxonomy" id="284812"/>
    <lineage>
        <taxon>Eukaryota</taxon>
        <taxon>Fungi</taxon>
        <taxon>Dikarya</taxon>
        <taxon>Ascomycota</taxon>
        <taxon>Taphrinomycotina</taxon>
        <taxon>Schizosaccharomycetes</taxon>
        <taxon>Schizosaccharomycetales</taxon>
        <taxon>Schizosaccharomycetaceae</taxon>
        <taxon>Schizosaccharomyces</taxon>
    </lineage>
</organism>
<protein>
    <recommendedName>
        <fullName>Uncharacterized RING finger protein C6B12.07c</fullName>
    </recommendedName>
</protein>
<dbReference type="EMBL" id="CU329670">
    <property type="protein sequence ID" value="CAB11077.2"/>
    <property type="molecule type" value="Genomic_DNA"/>
</dbReference>
<dbReference type="PIR" id="T39014">
    <property type="entry name" value="T39014"/>
</dbReference>
<dbReference type="SMR" id="O14212"/>
<dbReference type="BioGRID" id="279739">
    <property type="interactions" value="24"/>
</dbReference>
<dbReference type="STRING" id="284812.O14212"/>
<dbReference type="iPTMnet" id="O14212"/>
<dbReference type="PaxDb" id="4896-SPAC6B12.07c.1"/>
<dbReference type="EnsemblFungi" id="SPAC6B12.07c.1">
    <property type="protein sequence ID" value="SPAC6B12.07c.1:pep"/>
    <property type="gene ID" value="SPAC6B12.07c"/>
</dbReference>
<dbReference type="KEGG" id="spo:2543315"/>
<dbReference type="PomBase" id="SPAC6B12.07c"/>
<dbReference type="VEuPathDB" id="FungiDB:SPAC6B12.07c"/>
<dbReference type="eggNOG" id="KOG4159">
    <property type="taxonomic scope" value="Eukaryota"/>
</dbReference>
<dbReference type="HOGENOM" id="CLU_017137_2_1_1"/>
<dbReference type="InParanoid" id="O14212"/>
<dbReference type="OMA" id="CIRCLIV"/>
<dbReference type="PRO" id="PR:O14212"/>
<dbReference type="Proteomes" id="UP000002485">
    <property type="component" value="Chromosome I"/>
</dbReference>
<dbReference type="GO" id="GO:0005829">
    <property type="term" value="C:cytosol"/>
    <property type="evidence" value="ECO:0000314"/>
    <property type="project" value="PomBase"/>
</dbReference>
<dbReference type="GO" id="GO:0061630">
    <property type="term" value="F:ubiquitin protein ligase activity"/>
    <property type="evidence" value="ECO:0000315"/>
    <property type="project" value="PomBase"/>
</dbReference>
<dbReference type="GO" id="GO:0008270">
    <property type="term" value="F:zinc ion binding"/>
    <property type="evidence" value="ECO:0000255"/>
    <property type="project" value="PomBase"/>
</dbReference>
<dbReference type="GO" id="GO:1904352">
    <property type="term" value="P:positive regulation of protein catabolic process in the vacuole"/>
    <property type="evidence" value="ECO:0000315"/>
    <property type="project" value="PomBase"/>
</dbReference>
<dbReference type="GO" id="GO:2000185">
    <property type="term" value="P:regulation of phosphate transmembrane transport"/>
    <property type="evidence" value="ECO:0000315"/>
    <property type="project" value="PomBase"/>
</dbReference>
<dbReference type="CDD" id="cd23137">
    <property type="entry name" value="RING-HC_TRY3-like"/>
    <property type="match status" value="1"/>
</dbReference>
<dbReference type="Gene3D" id="3.30.40.10">
    <property type="entry name" value="Zinc/RING finger domain, C3HC4 (zinc finger)"/>
    <property type="match status" value="1"/>
</dbReference>
<dbReference type="InterPro" id="IPR004331">
    <property type="entry name" value="SPX_dom"/>
</dbReference>
<dbReference type="InterPro" id="IPR018957">
    <property type="entry name" value="Znf_C3HC4_RING-type"/>
</dbReference>
<dbReference type="InterPro" id="IPR001841">
    <property type="entry name" value="Znf_RING"/>
</dbReference>
<dbReference type="InterPro" id="IPR013083">
    <property type="entry name" value="Znf_RING/FYVE/PHD"/>
</dbReference>
<dbReference type="InterPro" id="IPR017907">
    <property type="entry name" value="Znf_RING_CS"/>
</dbReference>
<dbReference type="PANTHER" id="PTHR23327">
    <property type="entry name" value="RING FINGER PROTEIN 127"/>
    <property type="match status" value="1"/>
</dbReference>
<dbReference type="PANTHER" id="PTHR23327:SF51">
    <property type="entry name" value="TRANSCRIPTIONAL REGULATOR OF YEAST FORM ADHERENCE 3"/>
    <property type="match status" value="1"/>
</dbReference>
<dbReference type="Pfam" id="PF03105">
    <property type="entry name" value="SPX"/>
    <property type="match status" value="1"/>
</dbReference>
<dbReference type="Pfam" id="PF00097">
    <property type="entry name" value="zf-C3HC4"/>
    <property type="match status" value="1"/>
</dbReference>
<dbReference type="SMART" id="SM00184">
    <property type="entry name" value="RING"/>
    <property type="match status" value="1"/>
</dbReference>
<dbReference type="SUPFAM" id="SSF57850">
    <property type="entry name" value="RING/U-box"/>
    <property type="match status" value="1"/>
</dbReference>
<dbReference type="PROSITE" id="PS51382">
    <property type="entry name" value="SPX"/>
    <property type="match status" value="1"/>
</dbReference>
<dbReference type="PROSITE" id="PS00518">
    <property type="entry name" value="ZF_RING_1"/>
    <property type="match status" value="1"/>
</dbReference>
<dbReference type="PROSITE" id="PS50089">
    <property type="entry name" value="ZF_RING_2"/>
    <property type="match status" value="1"/>
</dbReference>
<reference key="1">
    <citation type="journal article" date="2002" name="Nature">
        <title>The genome sequence of Schizosaccharomyces pombe.</title>
        <authorList>
            <person name="Wood V."/>
            <person name="Gwilliam R."/>
            <person name="Rajandream M.A."/>
            <person name="Lyne M.H."/>
            <person name="Lyne R."/>
            <person name="Stewart A."/>
            <person name="Sgouros J.G."/>
            <person name="Peat N."/>
            <person name="Hayles J."/>
            <person name="Baker S.G."/>
            <person name="Basham D."/>
            <person name="Bowman S."/>
            <person name="Brooks K."/>
            <person name="Brown D."/>
            <person name="Brown S."/>
            <person name="Chillingworth T."/>
            <person name="Churcher C.M."/>
            <person name="Collins M."/>
            <person name="Connor R."/>
            <person name="Cronin A."/>
            <person name="Davis P."/>
            <person name="Feltwell T."/>
            <person name="Fraser A."/>
            <person name="Gentles S."/>
            <person name="Goble A."/>
            <person name="Hamlin N."/>
            <person name="Harris D.E."/>
            <person name="Hidalgo J."/>
            <person name="Hodgson G."/>
            <person name="Holroyd S."/>
            <person name="Hornsby T."/>
            <person name="Howarth S."/>
            <person name="Huckle E.J."/>
            <person name="Hunt S."/>
            <person name="Jagels K."/>
            <person name="James K.D."/>
            <person name="Jones L."/>
            <person name="Jones M."/>
            <person name="Leather S."/>
            <person name="McDonald S."/>
            <person name="McLean J."/>
            <person name="Mooney P."/>
            <person name="Moule S."/>
            <person name="Mungall K.L."/>
            <person name="Murphy L.D."/>
            <person name="Niblett D."/>
            <person name="Odell C."/>
            <person name="Oliver K."/>
            <person name="O'Neil S."/>
            <person name="Pearson D."/>
            <person name="Quail M.A."/>
            <person name="Rabbinowitsch E."/>
            <person name="Rutherford K.M."/>
            <person name="Rutter S."/>
            <person name="Saunders D."/>
            <person name="Seeger K."/>
            <person name="Sharp S."/>
            <person name="Skelton J."/>
            <person name="Simmonds M.N."/>
            <person name="Squares R."/>
            <person name="Squares S."/>
            <person name="Stevens K."/>
            <person name="Taylor K."/>
            <person name="Taylor R.G."/>
            <person name="Tivey A."/>
            <person name="Walsh S.V."/>
            <person name="Warren T."/>
            <person name="Whitehead S."/>
            <person name="Woodward J.R."/>
            <person name="Volckaert G."/>
            <person name="Aert R."/>
            <person name="Robben J."/>
            <person name="Grymonprez B."/>
            <person name="Weltjens I."/>
            <person name="Vanstreels E."/>
            <person name="Rieger M."/>
            <person name="Schaefer M."/>
            <person name="Mueller-Auer S."/>
            <person name="Gabel C."/>
            <person name="Fuchs M."/>
            <person name="Duesterhoeft A."/>
            <person name="Fritzc C."/>
            <person name="Holzer E."/>
            <person name="Moestl D."/>
            <person name="Hilbert H."/>
            <person name="Borzym K."/>
            <person name="Langer I."/>
            <person name="Beck A."/>
            <person name="Lehrach H."/>
            <person name="Reinhardt R."/>
            <person name="Pohl T.M."/>
            <person name="Eger P."/>
            <person name="Zimmermann W."/>
            <person name="Wedler H."/>
            <person name="Wambutt R."/>
            <person name="Purnelle B."/>
            <person name="Goffeau A."/>
            <person name="Cadieu E."/>
            <person name="Dreano S."/>
            <person name="Gloux S."/>
            <person name="Lelaure V."/>
            <person name="Mottier S."/>
            <person name="Galibert F."/>
            <person name="Aves S.J."/>
            <person name="Xiang Z."/>
            <person name="Hunt C."/>
            <person name="Moore K."/>
            <person name="Hurst S.M."/>
            <person name="Lucas M."/>
            <person name="Rochet M."/>
            <person name="Gaillardin C."/>
            <person name="Tallada V.A."/>
            <person name="Garzon A."/>
            <person name="Thode G."/>
            <person name="Daga R.R."/>
            <person name="Cruzado L."/>
            <person name="Jimenez J."/>
            <person name="Sanchez M."/>
            <person name="del Rey F."/>
            <person name="Benito J."/>
            <person name="Dominguez A."/>
            <person name="Revuelta J.L."/>
            <person name="Moreno S."/>
            <person name="Armstrong J."/>
            <person name="Forsburg S.L."/>
            <person name="Cerutti L."/>
            <person name="Lowe T."/>
            <person name="McCombie W.R."/>
            <person name="Paulsen I."/>
            <person name="Potashkin J."/>
            <person name="Shpakovski G.V."/>
            <person name="Ussery D."/>
            <person name="Barrell B.G."/>
            <person name="Nurse P."/>
        </authorList>
    </citation>
    <scope>NUCLEOTIDE SEQUENCE [LARGE SCALE GENOMIC DNA]</scope>
    <source>
        <strain>972 / ATCC 24843</strain>
    </source>
</reference>
<reference key="2">
    <citation type="journal article" date="2011" name="Science">
        <title>Comparative functional genomics of the fission yeasts.</title>
        <authorList>
            <person name="Rhind N."/>
            <person name="Chen Z."/>
            <person name="Yassour M."/>
            <person name="Thompson D.A."/>
            <person name="Haas B.J."/>
            <person name="Habib N."/>
            <person name="Wapinski I."/>
            <person name="Roy S."/>
            <person name="Lin M.F."/>
            <person name="Heiman D.I."/>
            <person name="Young S.K."/>
            <person name="Furuya K."/>
            <person name="Guo Y."/>
            <person name="Pidoux A."/>
            <person name="Chen H.M."/>
            <person name="Robbertse B."/>
            <person name="Goldberg J.M."/>
            <person name="Aoki K."/>
            <person name="Bayne E.H."/>
            <person name="Berlin A.M."/>
            <person name="Desjardins C.A."/>
            <person name="Dobbs E."/>
            <person name="Dukaj L."/>
            <person name="Fan L."/>
            <person name="FitzGerald M.G."/>
            <person name="French C."/>
            <person name="Gujja S."/>
            <person name="Hansen K."/>
            <person name="Keifenheim D."/>
            <person name="Levin J.Z."/>
            <person name="Mosher R.A."/>
            <person name="Mueller C.A."/>
            <person name="Pfiffner J."/>
            <person name="Priest M."/>
            <person name="Russ C."/>
            <person name="Smialowska A."/>
            <person name="Swoboda P."/>
            <person name="Sykes S.M."/>
            <person name="Vaughn M."/>
            <person name="Vengrova S."/>
            <person name="Yoder R."/>
            <person name="Zeng Q."/>
            <person name="Allshire R."/>
            <person name="Baulcombe D."/>
            <person name="Birren B.W."/>
            <person name="Brown W."/>
            <person name="Ekwall K."/>
            <person name="Kellis M."/>
            <person name="Leatherwood J."/>
            <person name="Levin H."/>
            <person name="Margalit H."/>
            <person name="Martienssen R."/>
            <person name="Nieduszynski C.A."/>
            <person name="Spatafora J.W."/>
            <person name="Friedman N."/>
            <person name="Dalgaard J.Z."/>
            <person name="Baumann P."/>
            <person name="Niki H."/>
            <person name="Regev A."/>
            <person name="Nusbaum C."/>
        </authorList>
    </citation>
    <scope>REVISION OF GENE MODEL</scope>
</reference>
<reference key="3">
    <citation type="journal article" date="2006" name="Nat. Biotechnol.">
        <title>ORFeome cloning and global analysis of protein localization in the fission yeast Schizosaccharomyces pombe.</title>
        <authorList>
            <person name="Matsuyama A."/>
            <person name="Arai R."/>
            <person name="Yashiroda Y."/>
            <person name="Shirai A."/>
            <person name="Kamata A."/>
            <person name="Sekido S."/>
            <person name="Kobayashi Y."/>
            <person name="Hashimoto A."/>
            <person name="Hamamoto M."/>
            <person name="Hiraoka Y."/>
            <person name="Horinouchi S."/>
            <person name="Yoshida M."/>
        </authorList>
    </citation>
    <scope>SUBCELLULAR LOCATION [LARGE SCALE ANALYSIS]</scope>
</reference>
<sequence>MKFGHDFKRALENDMPPGWGEAAIQYKALKKCIKRFVFELSSLGLSAETISKLMAPTTVDPQQAITLSYSLGKEGHIVVPKIIINVNFDKLKTDKFAASMFKQLNASNMITTVRSNYASNVPSTPSDSTQQPPTNTLPSVSASSQSVETCETVDEDIDTQTMSSDMSEVQSMEISLNCDHEFFEKLTSELQSVEGLQREQRKILFNAIDILSHEISLIASPNSKKKYKSLYCWRKIFEIYMDSDIFISCKEADQSHERTPELAERHLKWFDDQVRLAKCLPSSSKHRDRILYAKFLELNESLLKVASFQQMNKLAVTKIMKKFDKRTSLTAQPLFFQVIESDPLLLVDNASKAICFSLSSKLFSIIPQLRDFECAICSNVAYKPVRLGCSHVFCLHCLIILQKQKVDFCPLCRAKEVMKADSRNIDHALMNFMKTYFPREIKEKFEENENDTFTPSSISVVSGQNNCVIM</sequence>
<feature type="chain" id="PRO_0000303898" description="Uncharacterized RING finger protein C6B12.07c">
    <location>
        <begin position="1"/>
        <end position="470"/>
    </location>
</feature>
<feature type="domain" description="SPX" evidence="2">
    <location>
        <begin position="1"/>
        <end position="337"/>
    </location>
</feature>
<feature type="zinc finger region" description="RING-type" evidence="1">
    <location>
        <begin position="374"/>
        <end position="413"/>
    </location>
</feature>
<feature type="region of interest" description="Disordered" evidence="3">
    <location>
        <begin position="118"/>
        <end position="145"/>
    </location>
</feature>
<feature type="compositionally biased region" description="Low complexity" evidence="3">
    <location>
        <begin position="122"/>
        <end position="136"/>
    </location>
</feature>